<protein>
    <recommendedName>
        <fullName evidence="1">Small ribosomal subunit protein uS4</fullName>
    </recommendedName>
    <alternativeName>
        <fullName evidence="2">30S ribosomal protein S4</fullName>
    </alternativeName>
</protein>
<sequence>MPNQSRPKVKKSRALGIALTPKAVKYFEARPYPPGEHGRGRKQNSDYKVRLLEKQRLRAQYDISERQMARAYDRAKKAEGKTGEALVVELERRLDALVLRSGIARTIYQARQMVVHGHIEVNGGKVDKPSFRVRPDDIVQVRERSRSKVPFQVAREGGYDTDGETPRYLQVNLKALAFRLDRDPNRKEIPVICDEQLVVEYYAR</sequence>
<name>RS4_STRGG</name>
<organism>
    <name type="scientific">Streptomyces griseus subsp. griseus (strain JCM 4626 / CBS 651.72 / NBRC 13350 / KCC S-0626 / ISP 5235)</name>
    <dbReference type="NCBI Taxonomy" id="455632"/>
    <lineage>
        <taxon>Bacteria</taxon>
        <taxon>Bacillati</taxon>
        <taxon>Actinomycetota</taxon>
        <taxon>Actinomycetes</taxon>
        <taxon>Kitasatosporales</taxon>
        <taxon>Streptomycetaceae</taxon>
        <taxon>Streptomyces</taxon>
    </lineage>
</organism>
<dbReference type="EMBL" id="AP009493">
    <property type="protein sequence ID" value="BAG22859.1"/>
    <property type="molecule type" value="Genomic_DNA"/>
</dbReference>
<dbReference type="RefSeq" id="WP_003970343.1">
    <property type="nucleotide sequence ID" value="NC_010572.1"/>
</dbReference>
<dbReference type="SMR" id="B1W3H7"/>
<dbReference type="GeneID" id="91316458"/>
<dbReference type="KEGG" id="sgr:SGR_6030"/>
<dbReference type="eggNOG" id="COG0522">
    <property type="taxonomic scope" value="Bacteria"/>
</dbReference>
<dbReference type="HOGENOM" id="CLU_092403_0_3_11"/>
<dbReference type="Proteomes" id="UP000001685">
    <property type="component" value="Chromosome"/>
</dbReference>
<dbReference type="GO" id="GO:0015935">
    <property type="term" value="C:small ribosomal subunit"/>
    <property type="evidence" value="ECO:0007669"/>
    <property type="project" value="InterPro"/>
</dbReference>
<dbReference type="GO" id="GO:0019843">
    <property type="term" value="F:rRNA binding"/>
    <property type="evidence" value="ECO:0007669"/>
    <property type="project" value="UniProtKB-UniRule"/>
</dbReference>
<dbReference type="GO" id="GO:0003735">
    <property type="term" value="F:structural constituent of ribosome"/>
    <property type="evidence" value="ECO:0007669"/>
    <property type="project" value="InterPro"/>
</dbReference>
<dbReference type="GO" id="GO:0042274">
    <property type="term" value="P:ribosomal small subunit biogenesis"/>
    <property type="evidence" value="ECO:0007669"/>
    <property type="project" value="TreeGrafter"/>
</dbReference>
<dbReference type="GO" id="GO:0006412">
    <property type="term" value="P:translation"/>
    <property type="evidence" value="ECO:0007669"/>
    <property type="project" value="UniProtKB-UniRule"/>
</dbReference>
<dbReference type="CDD" id="cd00165">
    <property type="entry name" value="S4"/>
    <property type="match status" value="1"/>
</dbReference>
<dbReference type="FunFam" id="3.10.290.10:FF:000001">
    <property type="entry name" value="30S ribosomal protein S4"/>
    <property type="match status" value="1"/>
</dbReference>
<dbReference type="Gene3D" id="1.10.1050.10">
    <property type="entry name" value="Ribosomal Protein S4 Delta 41, Chain A, domain 1"/>
    <property type="match status" value="1"/>
</dbReference>
<dbReference type="Gene3D" id="3.10.290.10">
    <property type="entry name" value="RNA-binding S4 domain"/>
    <property type="match status" value="1"/>
</dbReference>
<dbReference type="HAMAP" id="MF_01306_B">
    <property type="entry name" value="Ribosomal_uS4_B"/>
    <property type="match status" value="1"/>
</dbReference>
<dbReference type="InterPro" id="IPR022801">
    <property type="entry name" value="Ribosomal_uS4"/>
</dbReference>
<dbReference type="InterPro" id="IPR005709">
    <property type="entry name" value="Ribosomal_uS4_bac-type"/>
</dbReference>
<dbReference type="InterPro" id="IPR018079">
    <property type="entry name" value="Ribosomal_uS4_CS"/>
</dbReference>
<dbReference type="InterPro" id="IPR001912">
    <property type="entry name" value="Ribosomal_uS4_N"/>
</dbReference>
<dbReference type="InterPro" id="IPR002942">
    <property type="entry name" value="S4_RNA-bd"/>
</dbReference>
<dbReference type="InterPro" id="IPR036986">
    <property type="entry name" value="S4_RNA-bd_sf"/>
</dbReference>
<dbReference type="NCBIfam" id="NF003717">
    <property type="entry name" value="PRK05327.1"/>
    <property type="match status" value="1"/>
</dbReference>
<dbReference type="NCBIfam" id="TIGR01017">
    <property type="entry name" value="rpsD_bact"/>
    <property type="match status" value="1"/>
</dbReference>
<dbReference type="PANTHER" id="PTHR11831">
    <property type="entry name" value="30S 40S RIBOSOMAL PROTEIN"/>
    <property type="match status" value="1"/>
</dbReference>
<dbReference type="PANTHER" id="PTHR11831:SF4">
    <property type="entry name" value="SMALL RIBOSOMAL SUBUNIT PROTEIN US4M"/>
    <property type="match status" value="1"/>
</dbReference>
<dbReference type="Pfam" id="PF00163">
    <property type="entry name" value="Ribosomal_S4"/>
    <property type="match status" value="1"/>
</dbReference>
<dbReference type="Pfam" id="PF01479">
    <property type="entry name" value="S4"/>
    <property type="match status" value="1"/>
</dbReference>
<dbReference type="SMART" id="SM01390">
    <property type="entry name" value="Ribosomal_S4"/>
    <property type="match status" value="1"/>
</dbReference>
<dbReference type="SMART" id="SM00363">
    <property type="entry name" value="S4"/>
    <property type="match status" value="1"/>
</dbReference>
<dbReference type="SUPFAM" id="SSF55174">
    <property type="entry name" value="Alpha-L RNA-binding motif"/>
    <property type="match status" value="1"/>
</dbReference>
<dbReference type="PROSITE" id="PS00632">
    <property type="entry name" value="RIBOSOMAL_S4"/>
    <property type="match status" value="1"/>
</dbReference>
<dbReference type="PROSITE" id="PS50889">
    <property type="entry name" value="S4"/>
    <property type="match status" value="1"/>
</dbReference>
<proteinExistence type="inferred from homology"/>
<reference key="1">
    <citation type="journal article" date="2008" name="J. Bacteriol.">
        <title>Genome sequence of the streptomycin-producing microorganism Streptomyces griseus IFO 13350.</title>
        <authorList>
            <person name="Ohnishi Y."/>
            <person name="Ishikawa J."/>
            <person name="Hara H."/>
            <person name="Suzuki H."/>
            <person name="Ikenoya M."/>
            <person name="Ikeda H."/>
            <person name="Yamashita A."/>
            <person name="Hattori M."/>
            <person name="Horinouchi S."/>
        </authorList>
    </citation>
    <scope>NUCLEOTIDE SEQUENCE [LARGE SCALE GENOMIC DNA]</scope>
    <source>
        <strain>JCM 4626 / CBS 651.72 / NBRC 13350 / KCC S-0626 / ISP 5235</strain>
    </source>
</reference>
<comment type="function">
    <text evidence="1">One of the primary rRNA binding proteins, it binds directly to 16S rRNA where it nucleates assembly of the body of the 30S subunit.</text>
</comment>
<comment type="function">
    <text evidence="1">With S5 and S12 plays an important role in translational accuracy.</text>
</comment>
<comment type="subunit">
    <text evidence="1">Part of the 30S ribosomal subunit. Contacts protein S5. The interaction surface between S4 and S5 is involved in control of translational fidelity.</text>
</comment>
<comment type="similarity">
    <text evidence="1">Belongs to the universal ribosomal protein uS4 family.</text>
</comment>
<feature type="chain" id="PRO_1000140796" description="Small ribosomal subunit protein uS4">
    <location>
        <begin position="1"/>
        <end position="204"/>
    </location>
</feature>
<feature type="domain" description="S4 RNA-binding" evidence="1">
    <location>
        <begin position="92"/>
        <end position="156"/>
    </location>
</feature>
<keyword id="KW-0687">Ribonucleoprotein</keyword>
<keyword id="KW-0689">Ribosomal protein</keyword>
<keyword id="KW-0694">RNA-binding</keyword>
<keyword id="KW-0699">rRNA-binding</keyword>
<evidence type="ECO:0000255" key="1">
    <source>
        <dbReference type="HAMAP-Rule" id="MF_01306"/>
    </source>
</evidence>
<evidence type="ECO:0000305" key="2"/>
<gene>
    <name evidence="1" type="primary">rpsD</name>
    <name type="ordered locus">SGR_6030</name>
</gene>
<accession>B1W3H7</accession>